<feature type="chain" id="PRO_0000336918" description="7-cyano-7-deazaguanine synthase">
    <location>
        <begin position="1"/>
        <end position="239"/>
    </location>
</feature>
<feature type="binding site" evidence="1">
    <location>
        <begin position="12"/>
        <end position="22"/>
    </location>
    <ligand>
        <name>ATP</name>
        <dbReference type="ChEBI" id="CHEBI:30616"/>
    </ligand>
</feature>
<feature type="binding site" evidence="1">
    <location>
        <position position="200"/>
    </location>
    <ligand>
        <name>Zn(2+)</name>
        <dbReference type="ChEBI" id="CHEBI:29105"/>
    </ligand>
</feature>
<feature type="binding site" evidence="1">
    <location>
        <position position="215"/>
    </location>
    <ligand>
        <name>Zn(2+)</name>
        <dbReference type="ChEBI" id="CHEBI:29105"/>
    </ligand>
</feature>
<feature type="binding site" evidence="1">
    <location>
        <position position="218"/>
    </location>
    <ligand>
        <name>Zn(2+)</name>
        <dbReference type="ChEBI" id="CHEBI:29105"/>
    </ligand>
</feature>
<feature type="binding site" evidence="1">
    <location>
        <position position="221"/>
    </location>
    <ligand>
        <name>Zn(2+)</name>
        <dbReference type="ChEBI" id="CHEBI:29105"/>
    </ligand>
</feature>
<gene>
    <name evidence="1" type="primary">queC</name>
    <name type="ordered locus">HNE_0531</name>
</gene>
<dbReference type="EC" id="6.3.4.20" evidence="1"/>
<dbReference type="EMBL" id="CP000158">
    <property type="protein sequence ID" value="ABI77891.1"/>
    <property type="molecule type" value="Genomic_DNA"/>
</dbReference>
<dbReference type="RefSeq" id="WP_011645561.1">
    <property type="nucleotide sequence ID" value="NC_008358.1"/>
</dbReference>
<dbReference type="SMR" id="Q0C4T2"/>
<dbReference type="STRING" id="228405.HNE_0531"/>
<dbReference type="KEGG" id="hne:HNE_0531"/>
<dbReference type="eggNOG" id="COG0603">
    <property type="taxonomic scope" value="Bacteria"/>
</dbReference>
<dbReference type="HOGENOM" id="CLU_081854_0_0_5"/>
<dbReference type="UniPathway" id="UPA00391"/>
<dbReference type="Proteomes" id="UP000001959">
    <property type="component" value="Chromosome"/>
</dbReference>
<dbReference type="GO" id="GO:0005524">
    <property type="term" value="F:ATP binding"/>
    <property type="evidence" value="ECO:0007669"/>
    <property type="project" value="UniProtKB-UniRule"/>
</dbReference>
<dbReference type="GO" id="GO:0016879">
    <property type="term" value="F:ligase activity, forming carbon-nitrogen bonds"/>
    <property type="evidence" value="ECO:0007669"/>
    <property type="project" value="UniProtKB-UniRule"/>
</dbReference>
<dbReference type="GO" id="GO:0008270">
    <property type="term" value="F:zinc ion binding"/>
    <property type="evidence" value="ECO:0007669"/>
    <property type="project" value="UniProtKB-UniRule"/>
</dbReference>
<dbReference type="GO" id="GO:0008616">
    <property type="term" value="P:queuosine biosynthetic process"/>
    <property type="evidence" value="ECO:0007669"/>
    <property type="project" value="UniProtKB-UniRule"/>
</dbReference>
<dbReference type="CDD" id="cd01995">
    <property type="entry name" value="QueC-like"/>
    <property type="match status" value="1"/>
</dbReference>
<dbReference type="Gene3D" id="3.40.50.620">
    <property type="entry name" value="HUPs"/>
    <property type="match status" value="1"/>
</dbReference>
<dbReference type="HAMAP" id="MF_01633">
    <property type="entry name" value="QueC"/>
    <property type="match status" value="1"/>
</dbReference>
<dbReference type="InterPro" id="IPR018317">
    <property type="entry name" value="QueC"/>
</dbReference>
<dbReference type="InterPro" id="IPR014729">
    <property type="entry name" value="Rossmann-like_a/b/a_fold"/>
</dbReference>
<dbReference type="NCBIfam" id="TIGR00364">
    <property type="entry name" value="7-cyano-7-deazaguanine synthase QueC"/>
    <property type="match status" value="1"/>
</dbReference>
<dbReference type="PANTHER" id="PTHR42914">
    <property type="entry name" value="7-CYANO-7-DEAZAGUANINE SYNTHASE"/>
    <property type="match status" value="1"/>
</dbReference>
<dbReference type="PANTHER" id="PTHR42914:SF1">
    <property type="entry name" value="7-CYANO-7-DEAZAGUANINE SYNTHASE"/>
    <property type="match status" value="1"/>
</dbReference>
<dbReference type="Pfam" id="PF06508">
    <property type="entry name" value="QueC"/>
    <property type="match status" value="1"/>
</dbReference>
<dbReference type="PIRSF" id="PIRSF006293">
    <property type="entry name" value="ExsB"/>
    <property type="match status" value="1"/>
</dbReference>
<dbReference type="SUPFAM" id="SSF52402">
    <property type="entry name" value="Adenine nucleotide alpha hydrolases-like"/>
    <property type="match status" value="1"/>
</dbReference>
<evidence type="ECO:0000255" key="1">
    <source>
        <dbReference type="HAMAP-Rule" id="MF_01633"/>
    </source>
</evidence>
<protein>
    <recommendedName>
        <fullName evidence="1">7-cyano-7-deazaguanine synthase</fullName>
        <ecNumber evidence="1">6.3.4.20</ecNumber>
    </recommendedName>
    <alternativeName>
        <fullName evidence="1">7-cyano-7-carbaguanine synthase</fullName>
    </alternativeName>
    <alternativeName>
        <fullName evidence="1">PreQ(0) synthase</fullName>
    </alternativeName>
    <alternativeName>
        <fullName evidence="1">Queuosine biosynthesis protein QueC</fullName>
    </alternativeName>
</protein>
<accession>Q0C4T2</accession>
<comment type="function">
    <text evidence="1">Catalyzes the ATP-dependent conversion of 7-carboxy-7-deazaguanine (CDG) to 7-cyano-7-deazaguanine (preQ(0)).</text>
</comment>
<comment type="catalytic activity">
    <reaction evidence="1">
        <text>7-carboxy-7-deazaguanine + NH4(+) + ATP = 7-cyano-7-deazaguanine + ADP + phosphate + H2O + H(+)</text>
        <dbReference type="Rhea" id="RHEA:27982"/>
        <dbReference type="ChEBI" id="CHEBI:15377"/>
        <dbReference type="ChEBI" id="CHEBI:15378"/>
        <dbReference type="ChEBI" id="CHEBI:28938"/>
        <dbReference type="ChEBI" id="CHEBI:30616"/>
        <dbReference type="ChEBI" id="CHEBI:43474"/>
        <dbReference type="ChEBI" id="CHEBI:45075"/>
        <dbReference type="ChEBI" id="CHEBI:61036"/>
        <dbReference type="ChEBI" id="CHEBI:456216"/>
        <dbReference type="EC" id="6.3.4.20"/>
    </reaction>
</comment>
<comment type="cofactor">
    <cofactor evidence="1">
        <name>Zn(2+)</name>
        <dbReference type="ChEBI" id="CHEBI:29105"/>
    </cofactor>
    <text evidence="1">Binds 1 zinc ion per subunit.</text>
</comment>
<comment type="pathway">
    <text evidence="1">Purine metabolism; 7-cyano-7-deazaguanine biosynthesis.</text>
</comment>
<comment type="similarity">
    <text evidence="1">Belongs to the QueC family.</text>
</comment>
<name>QUEC_HYPNA</name>
<keyword id="KW-0067">ATP-binding</keyword>
<keyword id="KW-0436">Ligase</keyword>
<keyword id="KW-0479">Metal-binding</keyword>
<keyword id="KW-0547">Nucleotide-binding</keyword>
<keyword id="KW-0671">Queuosine biosynthesis</keyword>
<keyword id="KW-1185">Reference proteome</keyword>
<keyword id="KW-0862">Zinc</keyword>
<organism>
    <name type="scientific">Hyphomonas neptunium (strain ATCC 15444)</name>
    <dbReference type="NCBI Taxonomy" id="228405"/>
    <lineage>
        <taxon>Bacteria</taxon>
        <taxon>Pseudomonadati</taxon>
        <taxon>Pseudomonadota</taxon>
        <taxon>Alphaproteobacteria</taxon>
        <taxon>Hyphomonadales</taxon>
        <taxon>Hyphomonadaceae</taxon>
        <taxon>Hyphomonas</taxon>
    </lineage>
</organism>
<proteinExistence type="inferred from homology"/>
<reference key="1">
    <citation type="journal article" date="2006" name="J. Bacteriol.">
        <title>Comparative genomic evidence for a close relationship between the dimorphic prosthecate bacteria Hyphomonas neptunium and Caulobacter crescentus.</title>
        <authorList>
            <person name="Badger J.H."/>
            <person name="Hoover T.R."/>
            <person name="Brun Y.V."/>
            <person name="Weiner R.M."/>
            <person name="Laub M.T."/>
            <person name="Alexandre G."/>
            <person name="Mrazek J."/>
            <person name="Ren Q."/>
            <person name="Paulsen I.T."/>
            <person name="Nelson K.E."/>
            <person name="Khouri H.M."/>
            <person name="Radune D."/>
            <person name="Sosa J."/>
            <person name="Dodson R.J."/>
            <person name="Sullivan S.A."/>
            <person name="Rosovitz M.J."/>
            <person name="Madupu R."/>
            <person name="Brinkac L.M."/>
            <person name="Durkin A.S."/>
            <person name="Daugherty S.C."/>
            <person name="Kothari S.P."/>
            <person name="Giglio M.G."/>
            <person name="Zhou L."/>
            <person name="Haft D.H."/>
            <person name="Selengut J.D."/>
            <person name="Davidsen T.M."/>
            <person name="Yang Q."/>
            <person name="Zafar N."/>
            <person name="Ward N.L."/>
        </authorList>
    </citation>
    <scope>NUCLEOTIDE SEQUENCE [LARGE SCALE GENOMIC DNA]</scope>
    <source>
        <strain>ATCC 15444</strain>
    </source>
</reference>
<sequence>MTQPISSALVLFSGGQDSATCLAWALDRFDRVETIGFDYGQRHAIELACRPKVRAAIRQMSPVWAEKLGEDHMIDAGVLKSLGATAMTHEVEISMTAAGLPNTFVPGRNLLFFTLAGALAVRRGIGVLVGGMCETDYSGYPDCRADTLKAQEQTLRLGLDADIRIDAPLMYLDKAATWQLAQELGGDALVALIGEETHTCYLGERGARHDWGYGCGTCPACELRSNGWQRWQDGKAAAP</sequence>